<proteinExistence type="inferred from homology"/>
<comment type="function">
    <text evidence="1">Component of the protein complex eIF4F, which is involved in the recognition of the mRNA cap, ATP-dependent unwinding of 5'-terminal secondary structure and recruitment of mRNA to the ribosome.</text>
</comment>
<comment type="subunit">
    <text evidence="1">Component of the eIF4F complex, which composition varies with external and internal environmental conditions.</text>
</comment>
<comment type="subcellular location">
    <subcellularLocation>
        <location evidence="1">Cytoplasm</location>
    </subcellularLocation>
</comment>
<comment type="similarity">
    <text evidence="3">Belongs to the eukaryotic initiation factor 4G family.</text>
</comment>
<organism>
    <name type="scientific">Encephalitozoon cuniculi (strain GB-M1)</name>
    <name type="common">Microsporidian parasite</name>
    <dbReference type="NCBI Taxonomy" id="284813"/>
    <lineage>
        <taxon>Eukaryota</taxon>
        <taxon>Fungi</taxon>
        <taxon>Fungi incertae sedis</taxon>
        <taxon>Microsporidia</taxon>
        <taxon>Unikaryonidae</taxon>
        <taxon>Encephalitozoon</taxon>
    </lineage>
</organism>
<feature type="chain" id="PRO_0000388435" description="Probable eukaryotic translation initiation factor 4 gamma homolog">
    <location>
        <begin position="1"/>
        <end position="610"/>
    </location>
</feature>
<feature type="domain" description="MIF4G">
    <location>
        <begin position="175"/>
        <end position="414"/>
    </location>
</feature>
<feature type="region of interest" description="Disordered" evidence="2">
    <location>
        <begin position="59"/>
        <end position="118"/>
    </location>
</feature>
<feature type="compositionally biased region" description="Basic and acidic residues" evidence="2">
    <location>
        <begin position="96"/>
        <end position="118"/>
    </location>
</feature>
<gene>
    <name type="primary">EIF4G</name>
    <name type="ordered locus">ECU04_1610</name>
</gene>
<name>IF4G_ENCCU</name>
<sequence length="610" mass="70279">MIKKIIHRPKRSLFVFKKEESLLYGPRVKSAPPIEISFEPPAKIEPKLAVRFTRADGTPIRKEDLLDSTDSEILSESSVESETEVENIPQEADTGNTREESEECQREAGAEEEPRPALEDRALMLDNLLKRFSEQKIAENRGPCYSVDEILSVEDRKAISLELKIKTRKEAKGVYRPDNNRKDTCIEQARLEFNRLTAKNIGLVIKNLKAIRVGTIEEMKEIAKILFDKAISEPTFVKYYALLVLDLKKEWQSEEEKTRDITQTVFFGTLLTLTLKTLENKERWGDEYERRKEMSFEERMAYEEKLEEAETERYIKKRRTLGTIDFLSSLYSLNVISYVHMNACINTLMKLDDSENVEVLCYLIENIGEKLVVSGKEHIISMVCSSLAQKKNSYTNRIRYMIESLLDKRSSWKPREAKAGNVFSCLEVENDYGNAQNQGSQESPSEDVLPFLSSLSEELSVAYEDDDKELLSDSLQSGESKFGVIPFYLSYFQEAISNHKVSDLLSDFFISFRSTSSITEEQLREVLLSLKGDLDVLKIDFPISPKKYSELITKLRASKVISQPLFEELKTSDYNSRATDIILRWYKSDRDREKALTIFPSEAIENLIRK</sequence>
<dbReference type="EMBL" id="AL590444">
    <property type="protein sequence ID" value="CAD25350.2"/>
    <property type="molecule type" value="Genomic_DNA"/>
</dbReference>
<dbReference type="RefSeq" id="NP_584846.1">
    <property type="nucleotide sequence ID" value="NM_001041196.1"/>
</dbReference>
<dbReference type="SMR" id="Q8SVP8"/>
<dbReference type="STRING" id="284813.Q8SVP8"/>
<dbReference type="GeneID" id="858994"/>
<dbReference type="KEGG" id="ecu:ECU04_1610"/>
<dbReference type="VEuPathDB" id="MicrosporidiaDB:ECU04_1610"/>
<dbReference type="HOGENOM" id="CLU_446896_0_0_1"/>
<dbReference type="InParanoid" id="Q8SVP8"/>
<dbReference type="OrthoDB" id="514777at2759"/>
<dbReference type="Proteomes" id="UP000000819">
    <property type="component" value="Chromosome IV"/>
</dbReference>
<dbReference type="GO" id="GO:0016281">
    <property type="term" value="C:eukaryotic translation initiation factor 4F complex"/>
    <property type="evidence" value="ECO:0007669"/>
    <property type="project" value="TreeGrafter"/>
</dbReference>
<dbReference type="GO" id="GO:0003729">
    <property type="term" value="F:mRNA binding"/>
    <property type="evidence" value="ECO:0007669"/>
    <property type="project" value="TreeGrafter"/>
</dbReference>
<dbReference type="GO" id="GO:0003743">
    <property type="term" value="F:translation initiation factor activity"/>
    <property type="evidence" value="ECO:0007669"/>
    <property type="project" value="UniProtKB-KW"/>
</dbReference>
<dbReference type="GO" id="GO:0006417">
    <property type="term" value="P:regulation of translation"/>
    <property type="evidence" value="ECO:0007669"/>
    <property type="project" value="UniProtKB-KW"/>
</dbReference>
<dbReference type="Gene3D" id="1.25.40.180">
    <property type="match status" value="2"/>
</dbReference>
<dbReference type="InterPro" id="IPR016024">
    <property type="entry name" value="ARM-type_fold"/>
</dbReference>
<dbReference type="InterPro" id="IPR003890">
    <property type="entry name" value="MIF4G-like_typ-3"/>
</dbReference>
<dbReference type="PANTHER" id="PTHR23253">
    <property type="entry name" value="EUKARYOTIC TRANSLATION INITIATION FACTOR 4 GAMMA"/>
    <property type="match status" value="1"/>
</dbReference>
<dbReference type="PANTHER" id="PTHR23253:SF9">
    <property type="entry name" value="EUKARYOTIC TRANSLATION INITIATION FACTOR 4 GAMMA 2"/>
    <property type="match status" value="1"/>
</dbReference>
<dbReference type="Pfam" id="PF02854">
    <property type="entry name" value="MIF4G"/>
    <property type="match status" value="1"/>
</dbReference>
<dbReference type="SMART" id="SM00543">
    <property type="entry name" value="MIF4G"/>
    <property type="match status" value="1"/>
</dbReference>
<dbReference type="SUPFAM" id="SSF48371">
    <property type="entry name" value="ARM repeat"/>
    <property type="match status" value="1"/>
</dbReference>
<protein>
    <recommendedName>
        <fullName>Probable eukaryotic translation initiation factor 4 gamma homolog</fullName>
        <shortName>eIF-4-gamma</shortName>
    </recommendedName>
</protein>
<accession>Q8SVP8</accession>
<evidence type="ECO:0000250" key="1"/>
<evidence type="ECO:0000256" key="2">
    <source>
        <dbReference type="SAM" id="MobiDB-lite"/>
    </source>
</evidence>
<evidence type="ECO:0000305" key="3"/>
<reference key="1">
    <citation type="journal article" date="2001" name="Nature">
        <title>Genome sequence and gene compaction of the eukaryote parasite Encephalitozoon cuniculi.</title>
        <authorList>
            <person name="Katinka M.D."/>
            <person name="Duprat S."/>
            <person name="Cornillot E."/>
            <person name="Metenier G."/>
            <person name="Thomarat F."/>
            <person name="Prensier G."/>
            <person name="Barbe V."/>
            <person name="Peyretaillade E."/>
            <person name="Brottier P."/>
            <person name="Wincker P."/>
            <person name="Delbac F."/>
            <person name="El Alaoui H."/>
            <person name="Peyret P."/>
            <person name="Saurin W."/>
            <person name="Gouy M."/>
            <person name="Weissenbach J."/>
            <person name="Vivares C.P."/>
        </authorList>
    </citation>
    <scope>NUCLEOTIDE SEQUENCE [LARGE SCALE GENOMIC DNA]</scope>
    <source>
        <strain>GB-M1</strain>
    </source>
</reference>
<reference key="2">
    <citation type="journal article" date="2009" name="BMC Genomics">
        <title>Identification of transcriptional signals in Encephalitozoon cuniculi widespread among Microsporidia phylum: support for accurate structural genome annotation.</title>
        <authorList>
            <person name="Peyretaillade E."/>
            <person name="Goncalves O."/>
            <person name="Terrat S."/>
            <person name="Dugat-Bony E."/>
            <person name="Wincker P."/>
            <person name="Cornman R.S."/>
            <person name="Evans J.D."/>
            <person name="Delbac F."/>
            <person name="Peyret P."/>
        </authorList>
    </citation>
    <scope>GENOME REANNOTATION</scope>
    <source>
        <strain>GB-M1</strain>
    </source>
</reference>
<keyword id="KW-0963">Cytoplasm</keyword>
<keyword id="KW-0396">Initiation factor</keyword>
<keyword id="KW-0648">Protein biosynthesis</keyword>
<keyword id="KW-1185">Reference proteome</keyword>
<keyword id="KW-0694">RNA-binding</keyword>
<keyword id="KW-0810">Translation regulation</keyword>